<accession>A1WUU5</accession>
<comment type="function">
    <text evidence="1">Catalyzes the reversible reaction in which hydroxymethyl group from 5,10-methylenetetrahydrofolate is transferred onto alpha-ketoisovalerate to form ketopantoate.</text>
</comment>
<comment type="catalytic activity">
    <reaction evidence="1">
        <text>3-methyl-2-oxobutanoate + (6R)-5,10-methylene-5,6,7,8-tetrahydrofolate + H2O = 2-dehydropantoate + (6S)-5,6,7,8-tetrahydrofolate</text>
        <dbReference type="Rhea" id="RHEA:11824"/>
        <dbReference type="ChEBI" id="CHEBI:11561"/>
        <dbReference type="ChEBI" id="CHEBI:11851"/>
        <dbReference type="ChEBI" id="CHEBI:15377"/>
        <dbReference type="ChEBI" id="CHEBI:15636"/>
        <dbReference type="ChEBI" id="CHEBI:57453"/>
        <dbReference type="EC" id="2.1.2.11"/>
    </reaction>
</comment>
<comment type="cofactor">
    <cofactor evidence="1">
        <name>Mg(2+)</name>
        <dbReference type="ChEBI" id="CHEBI:18420"/>
    </cofactor>
    <text evidence="1">Binds 1 Mg(2+) ion per subunit.</text>
</comment>
<comment type="pathway">
    <text evidence="1">Cofactor biosynthesis; (R)-pantothenate biosynthesis; (R)-pantoate from 3-methyl-2-oxobutanoate: step 1/2.</text>
</comment>
<comment type="subunit">
    <text evidence="1">Homodecamer; pentamer of dimers.</text>
</comment>
<comment type="subcellular location">
    <subcellularLocation>
        <location evidence="1">Cytoplasm</location>
    </subcellularLocation>
</comment>
<comment type="similarity">
    <text evidence="1">Belongs to the PanB family.</text>
</comment>
<reference key="1">
    <citation type="submission" date="2006-12" db="EMBL/GenBank/DDBJ databases">
        <title>Complete sequence of Halorhodospira halophila SL1.</title>
        <authorList>
            <consortium name="US DOE Joint Genome Institute"/>
            <person name="Copeland A."/>
            <person name="Lucas S."/>
            <person name="Lapidus A."/>
            <person name="Barry K."/>
            <person name="Detter J.C."/>
            <person name="Glavina del Rio T."/>
            <person name="Hammon N."/>
            <person name="Israni S."/>
            <person name="Dalin E."/>
            <person name="Tice H."/>
            <person name="Pitluck S."/>
            <person name="Saunders E."/>
            <person name="Brettin T."/>
            <person name="Bruce D."/>
            <person name="Han C."/>
            <person name="Tapia R."/>
            <person name="Schmutz J."/>
            <person name="Larimer F."/>
            <person name="Land M."/>
            <person name="Hauser L."/>
            <person name="Kyrpides N."/>
            <person name="Mikhailova N."/>
            <person name="Hoff W."/>
            <person name="Richardson P."/>
        </authorList>
    </citation>
    <scope>NUCLEOTIDE SEQUENCE [LARGE SCALE GENOMIC DNA]</scope>
    <source>
        <strain>DSM 244 / SL1</strain>
    </source>
</reference>
<proteinExistence type="inferred from homology"/>
<name>PANB_HALHL</name>
<gene>
    <name evidence="1" type="primary">panB</name>
    <name type="ordered locus">Hhal_0675</name>
</gene>
<feature type="chain" id="PRO_0000297280" description="3-methyl-2-oxobutanoate hydroxymethyltransferase">
    <location>
        <begin position="1"/>
        <end position="275"/>
    </location>
</feature>
<feature type="active site" description="Proton acceptor" evidence="1">
    <location>
        <position position="192"/>
    </location>
</feature>
<feature type="binding site" evidence="1">
    <location>
        <begin position="55"/>
        <end position="56"/>
    </location>
    <ligand>
        <name>3-methyl-2-oxobutanoate</name>
        <dbReference type="ChEBI" id="CHEBI:11851"/>
    </ligand>
</feature>
<feature type="binding site" evidence="1">
    <location>
        <position position="55"/>
    </location>
    <ligand>
        <name>Mg(2+)</name>
        <dbReference type="ChEBI" id="CHEBI:18420"/>
    </ligand>
</feature>
<feature type="binding site" evidence="1">
    <location>
        <position position="94"/>
    </location>
    <ligand>
        <name>3-methyl-2-oxobutanoate</name>
        <dbReference type="ChEBI" id="CHEBI:11851"/>
    </ligand>
</feature>
<feature type="binding site" evidence="1">
    <location>
        <position position="94"/>
    </location>
    <ligand>
        <name>Mg(2+)</name>
        <dbReference type="ChEBI" id="CHEBI:18420"/>
    </ligand>
</feature>
<feature type="binding site" evidence="1">
    <location>
        <position position="123"/>
    </location>
    <ligand>
        <name>3-methyl-2-oxobutanoate</name>
        <dbReference type="ChEBI" id="CHEBI:11851"/>
    </ligand>
</feature>
<feature type="binding site" evidence="1">
    <location>
        <position position="125"/>
    </location>
    <ligand>
        <name>Mg(2+)</name>
        <dbReference type="ChEBI" id="CHEBI:18420"/>
    </ligand>
</feature>
<organism>
    <name type="scientific">Halorhodospira halophila (strain DSM 244 / SL1)</name>
    <name type="common">Ectothiorhodospira halophila (strain DSM 244 / SL1)</name>
    <dbReference type="NCBI Taxonomy" id="349124"/>
    <lineage>
        <taxon>Bacteria</taxon>
        <taxon>Pseudomonadati</taxon>
        <taxon>Pseudomonadota</taxon>
        <taxon>Gammaproteobacteria</taxon>
        <taxon>Chromatiales</taxon>
        <taxon>Ectothiorhodospiraceae</taxon>
        <taxon>Halorhodospira</taxon>
    </lineage>
</organism>
<evidence type="ECO:0000255" key="1">
    <source>
        <dbReference type="HAMAP-Rule" id="MF_00156"/>
    </source>
</evidence>
<dbReference type="EC" id="2.1.2.11" evidence="1"/>
<dbReference type="EMBL" id="CP000544">
    <property type="protein sequence ID" value="ABM61457.1"/>
    <property type="molecule type" value="Genomic_DNA"/>
</dbReference>
<dbReference type="RefSeq" id="WP_011813480.1">
    <property type="nucleotide sequence ID" value="NC_008789.1"/>
</dbReference>
<dbReference type="SMR" id="A1WUU5"/>
<dbReference type="STRING" id="349124.Hhal_0675"/>
<dbReference type="KEGG" id="hha:Hhal_0675"/>
<dbReference type="eggNOG" id="COG0413">
    <property type="taxonomic scope" value="Bacteria"/>
</dbReference>
<dbReference type="HOGENOM" id="CLU_036645_1_0_6"/>
<dbReference type="OrthoDB" id="9781789at2"/>
<dbReference type="UniPathway" id="UPA00028">
    <property type="reaction ID" value="UER00003"/>
</dbReference>
<dbReference type="Proteomes" id="UP000000647">
    <property type="component" value="Chromosome"/>
</dbReference>
<dbReference type="GO" id="GO:0005737">
    <property type="term" value="C:cytoplasm"/>
    <property type="evidence" value="ECO:0007669"/>
    <property type="project" value="UniProtKB-SubCell"/>
</dbReference>
<dbReference type="GO" id="GO:0003864">
    <property type="term" value="F:3-methyl-2-oxobutanoate hydroxymethyltransferase activity"/>
    <property type="evidence" value="ECO:0007669"/>
    <property type="project" value="UniProtKB-UniRule"/>
</dbReference>
<dbReference type="GO" id="GO:0000287">
    <property type="term" value="F:magnesium ion binding"/>
    <property type="evidence" value="ECO:0007669"/>
    <property type="project" value="TreeGrafter"/>
</dbReference>
<dbReference type="GO" id="GO:0015940">
    <property type="term" value="P:pantothenate biosynthetic process"/>
    <property type="evidence" value="ECO:0007669"/>
    <property type="project" value="UniProtKB-UniRule"/>
</dbReference>
<dbReference type="CDD" id="cd06557">
    <property type="entry name" value="KPHMT-like"/>
    <property type="match status" value="1"/>
</dbReference>
<dbReference type="FunFam" id="3.20.20.60:FF:000003">
    <property type="entry name" value="3-methyl-2-oxobutanoate hydroxymethyltransferase"/>
    <property type="match status" value="1"/>
</dbReference>
<dbReference type="Gene3D" id="3.20.20.60">
    <property type="entry name" value="Phosphoenolpyruvate-binding domains"/>
    <property type="match status" value="1"/>
</dbReference>
<dbReference type="HAMAP" id="MF_00156">
    <property type="entry name" value="PanB"/>
    <property type="match status" value="1"/>
</dbReference>
<dbReference type="InterPro" id="IPR003700">
    <property type="entry name" value="Pantoate_hydroxy_MeTrfase"/>
</dbReference>
<dbReference type="InterPro" id="IPR015813">
    <property type="entry name" value="Pyrv/PenolPyrv_kinase-like_dom"/>
</dbReference>
<dbReference type="InterPro" id="IPR040442">
    <property type="entry name" value="Pyrv_kinase-like_dom_sf"/>
</dbReference>
<dbReference type="NCBIfam" id="TIGR00222">
    <property type="entry name" value="panB"/>
    <property type="match status" value="1"/>
</dbReference>
<dbReference type="NCBIfam" id="NF001452">
    <property type="entry name" value="PRK00311.1"/>
    <property type="match status" value="1"/>
</dbReference>
<dbReference type="PANTHER" id="PTHR20881">
    <property type="entry name" value="3-METHYL-2-OXOBUTANOATE HYDROXYMETHYLTRANSFERASE"/>
    <property type="match status" value="1"/>
</dbReference>
<dbReference type="PANTHER" id="PTHR20881:SF0">
    <property type="entry name" value="3-METHYL-2-OXOBUTANOATE HYDROXYMETHYLTRANSFERASE"/>
    <property type="match status" value="1"/>
</dbReference>
<dbReference type="Pfam" id="PF02548">
    <property type="entry name" value="Pantoate_transf"/>
    <property type="match status" value="1"/>
</dbReference>
<dbReference type="PIRSF" id="PIRSF000388">
    <property type="entry name" value="Pantoate_hydroxy_MeTrfase"/>
    <property type="match status" value="1"/>
</dbReference>
<dbReference type="SUPFAM" id="SSF51621">
    <property type="entry name" value="Phosphoenolpyruvate/pyruvate domain"/>
    <property type="match status" value="1"/>
</dbReference>
<protein>
    <recommendedName>
        <fullName evidence="1">3-methyl-2-oxobutanoate hydroxymethyltransferase</fullName>
        <ecNumber evidence="1">2.1.2.11</ecNumber>
    </recommendedName>
    <alternativeName>
        <fullName evidence="1">Ketopantoate hydroxymethyltransferase</fullName>
        <shortName evidence="1">KPHMT</shortName>
    </alternativeName>
</protein>
<sequence>MSSGDRKHASGGAVTVSRMRAMKREGRPLACLTAYDYGFAAACERAGVDLLLIGDSLGMVVQGHETTLPVTVDDMVYHTRCVARACRRALVVADLPFMSHTGVEQGLHNAGRLMKEGGAQMVKLEGGAEQAALVERLAQNGIPVCGHLGLKPQQVHKIGGYRVQGREQADAERMEADALALEAAGADLLILECVPAVLAQQLSERLTVPVVGIGAGGGCDGQILVLHDVLGVTEQPPRFARAFGAEGGGVHAALEAYVAAVRAGTFPGPEHGFEA</sequence>
<keyword id="KW-0963">Cytoplasm</keyword>
<keyword id="KW-0460">Magnesium</keyword>
<keyword id="KW-0479">Metal-binding</keyword>
<keyword id="KW-0566">Pantothenate biosynthesis</keyword>
<keyword id="KW-1185">Reference proteome</keyword>
<keyword id="KW-0808">Transferase</keyword>